<name>COQ4_DROME</name>
<feature type="chain" id="PRO_0000115242" description="Ubiquinone biosynthesis protein COQ4 homolog, mitochondrial">
    <location>
        <begin position="1"/>
        <end position="268"/>
    </location>
</feature>
<feature type="binding site" evidence="1">
    <location>
        <position position="171"/>
    </location>
    <ligand>
        <name>Zn(2+)</name>
        <dbReference type="ChEBI" id="CHEBI:29105"/>
    </ligand>
</feature>
<feature type="binding site" evidence="1">
    <location>
        <position position="172"/>
    </location>
    <ligand>
        <name>Zn(2+)</name>
        <dbReference type="ChEBI" id="CHEBI:29105"/>
    </ligand>
</feature>
<feature type="binding site" evidence="1">
    <location>
        <position position="175"/>
    </location>
    <ligand>
        <name>Zn(2+)</name>
        <dbReference type="ChEBI" id="CHEBI:29105"/>
    </ligand>
</feature>
<feature type="binding site" evidence="1">
    <location>
        <position position="187"/>
    </location>
    <ligand>
        <name>Zn(2+)</name>
        <dbReference type="ChEBI" id="CHEBI:29105"/>
    </ligand>
</feature>
<reference key="1">
    <citation type="journal article" date="2000" name="Science">
        <title>The genome sequence of Drosophila melanogaster.</title>
        <authorList>
            <person name="Adams M.D."/>
            <person name="Celniker S.E."/>
            <person name="Holt R.A."/>
            <person name="Evans C.A."/>
            <person name="Gocayne J.D."/>
            <person name="Amanatides P.G."/>
            <person name="Scherer S.E."/>
            <person name="Li P.W."/>
            <person name="Hoskins R.A."/>
            <person name="Galle R.F."/>
            <person name="George R.A."/>
            <person name="Lewis S.E."/>
            <person name="Richards S."/>
            <person name="Ashburner M."/>
            <person name="Henderson S.N."/>
            <person name="Sutton G.G."/>
            <person name="Wortman J.R."/>
            <person name="Yandell M.D."/>
            <person name="Zhang Q."/>
            <person name="Chen L.X."/>
            <person name="Brandon R.C."/>
            <person name="Rogers Y.-H.C."/>
            <person name="Blazej R.G."/>
            <person name="Champe M."/>
            <person name="Pfeiffer B.D."/>
            <person name="Wan K.H."/>
            <person name="Doyle C."/>
            <person name="Baxter E.G."/>
            <person name="Helt G."/>
            <person name="Nelson C.R."/>
            <person name="Miklos G.L.G."/>
            <person name="Abril J.F."/>
            <person name="Agbayani A."/>
            <person name="An H.-J."/>
            <person name="Andrews-Pfannkoch C."/>
            <person name="Baldwin D."/>
            <person name="Ballew R.M."/>
            <person name="Basu A."/>
            <person name="Baxendale J."/>
            <person name="Bayraktaroglu L."/>
            <person name="Beasley E.M."/>
            <person name="Beeson K.Y."/>
            <person name="Benos P.V."/>
            <person name="Berman B.P."/>
            <person name="Bhandari D."/>
            <person name="Bolshakov S."/>
            <person name="Borkova D."/>
            <person name="Botchan M.R."/>
            <person name="Bouck J."/>
            <person name="Brokstein P."/>
            <person name="Brottier P."/>
            <person name="Burtis K.C."/>
            <person name="Busam D.A."/>
            <person name="Butler H."/>
            <person name="Cadieu E."/>
            <person name="Center A."/>
            <person name="Chandra I."/>
            <person name="Cherry J.M."/>
            <person name="Cawley S."/>
            <person name="Dahlke C."/>
            <person name="Davenport L.B."/>
            <person name="Davies P."/>
            <person name="de Pablos B."/>
            <person name="Delcher A."/>
            <person name="Deng Z."/>
            <person name="Mays A.D."/>
            <person name="Dew I."/>
            <person name="Dietz S.M."/>
            <person name="Dodson K."/>
            <person name="Doup L.E."/>
            <person name="Downes M."/>
            <person name="Dugan-Rocha S."/>
            <person name="Dunkov B.C."/>
            <person name="Dunn P."/>
            <person name="Durbin K.J."/>
            <person name="Evangelista C.C."/>
            <person name="Ferraz C."/>
            <person name="Ferriera S."/>
            <person name="Fleischmann W."/>
            <person name="Fosler C."/>
            <person name="Gabrielian A.E."/>
            <person name="Garg N.S."/>
            <person name="Gelbart W.M."/>
            <person name="Glasser K."/>
            <person name="Glodek A."/>
            <person name="Gong F."/>
            <person name="Gorrell J.H."/>
            <person name="Gu Z."/>
            <person name="Guan P."/>
            <person name="Harris M."/>
            <person name="Harris N.L."/>
            <person name="Harvey D.A."/>
            <person name="Heiman T.J."/>
            <person name="Hernandez J.R."/>
            <person name="Houck J."/>
            <person name="Hostin D."/>
            <person name="Houston K.A."/>
            <person name="Howland T.J."/>
            <person name="Wei M.-H."/>
            <person name="Ibegwam C."/>
            <person name="Jalali M."/>
            <person name="Kalush F."/>
            <person name="Karpen G.H."/>
            <person name="Ke Z."/>
            <person name="Kennison J.A."/>
            <person name="Ketchum K.A."/>
            <person name="Kimmel B.E."/>
            <person name="Kodira C.D."/>
            <person name="Kraft C.L."/>
            <person name="Kravitz S."/>
            <person name="Kulp D."/>
            <person name="Lai Z."/>
            <person name="Lasko P."/>
            <person name="Lei Y."/>
            <person name="Levitsky A.A."/>
            <person name="Li J.H."/>
            <person name="Li Z."/>
            <person name="Liang Y."/>
            <person name="Lin X."/>
            <person name="Liu X."/>
            <person name="Mattei B."/>
            <person name="McIntosh T.C."/>
            <person name="McLeod M.P."/>
            <person name="McPherson D."/>
            <person name="Merkulov G."/>
            <person name="Milshina N.V."/>
            <person name="Mobarry C."/>
            <person name="Morris J."/>
            <person name="Moshrefi A."/>
            <person name="Mount S.M."/>
            <person name="Moy M."/>
            <person name="Murphy B."/>
            <person name="Murphy L."/>
            <person name="Muzny D.M."/>
            <person name="Nelson D.L."/>
            <person name="Nelson D.R."/>
            <person name="Nelson K.A."/>
            <person name="Nixon K."/>
            <person name="Nusskern D.R."/>
            <person name="Pacleb J.M."/>
            <person name="Palazzolo M."/>
            <person name="Pittman G.S."/>
            <person name="Pan S."/>
            <person name="Pollard J."/>
            <person name="Puri V."/>
            <person name="Reese M.G."/>
            <person name="Reinert K."/>
            <person name="Remington K."/>
            <person name="Saunders R.D.C."/>
            <person name="Scheeler F."/>
            <person name="Shen H."/>
            <person name="Shue B.C."/>
            <person name="Siden-Kiamos I."/>
            <person name="Simpson M."/>
            <person name="Skupski M.P."/>
            <person name="Smith T.J."/>
            <person name="Spier E."/>
            <person name="Spradling A.C."/>
            <person name="Stapleton M."/>
            <person name="Strong R."/>
            <person name="Sun E."/>
            <person name="Svirskas R."/>
            <person name="Tector C."/>
            <person name="Turner R."/>
            <person name="Venter E."/>
            <person name="Wang A.H."/>
            <person name="Wang X."/>
            <person name="Wang Z.-Y."/>
            <person name="Wassarman D.A."/>
            <person name="Weinstock G.M."/>
            <person name="Weissenbach J."/>
            <person name="Williams S.M."/>
            <person name="Woodage T."/>
            <person name="Worley K.C."/>
            <person name="Wu D."/>
            <person name="Yang S."/>
            <person name="Yao Q.A."/>
            <person name="Ye J."/>
            <person name="Yeh R.-F."/>
            <person name="Zaveri J.S."/>
            <person name="Zhan M."/>
            <person name="Zhang G."/>
            <person name="Zhao Q."/>
            <person name="Zheng L."/>
            <person name="Zheng X.H."/>
            <person name="Zhong F.N."/>
            <person name="Zhong W."/>
            <person name="Zhou X."/>
            <person name="Zhu S.C."/>
            <person name="Zhu X."/>
            <person name="Smith H.O."/>
            <person name="Gibbs R.A."/>
            <person name="Myers E.W."/>
            <person name="Rubin G.M."/>
            <person name="Venter J.C."/>
        </authorList>
    </citation>
    <scope>NUCLEOTIDE SEQUENCE [LARGE SCALE GENOMIC DNA]</scope>
    <source>
        <strain>Berkeley</strain>
    </source>
</reference>
<reference evidence="2" key="2">
    <citation type="journal article" date="2002" name="Genome Biol.">
        <title>Annotation of the Drosophila melanogaster euchromatic genome: a systematic review.</title>
        <authorList>
            <person name="Misra S."/>
            <person name="Crosby M.A."/>
            <person name="Mungall C.J."/>
            <person name="Matthews B.B."/>
            <person name="Campbell K.S."/>
            <person name="Hradecky P."/>
            <person name="Huang Y."/>
            <person name="Kaminker J.S."/>
            <person name="Millburn G.H."/>
            <person name="Prochnik S.E."/>
            <person name="Smith C.D."/>
            <person name="Tupy J.L."/>
            <person name="Whitfield E.J."/>
            <person name="Bayraktaroglu L."/>
            <person name="Berman B.P."/>
            <person name="Bettencourt B.R."/>
            <person name="Celniker S.E."/>
            <person name="de Grey A.D.N.J."/>
            <person name="Drysdale R.A."/>
            <person name="Harris N.L."/>
            <person name="Richter J."/>
            <person name="Russo S."/>
            <person name="Schroeder A.J."/>
            <person name="Shu S.Q."/>
            <person name="Stapleton M."/>
            <person name="Yamada C."/>
            <person name="Ashburner M."/>
            <person name="Gelbart W.M."/>
            <person name="Rubin G.M."/>
            <person name="Lewis S.E."/>
        </authorList>
    </citation>
    <scope>GENOME REANNOTATION</scope>
    <source>
        <strain>Berkeley</strain>
    </source>
</reference>
<accession>Q9VVG6</accession>
<accession>B7Z065</accession>
<evidence type="ECO:0000255" key="1">
    <source>
        <dbReference type="HAMAP-Rule" id="MF_03111"/>
    </source>
</evidence>
<evidence type="ECO:0000305" key="2"/>
<evidence type="ECO:0000312" key="3">
    <source>
        <dbReference type="EMBL" id="AAF49345.3"/>
    </source>
</evidence>
<evidence type="ECO:0000312" key="4">
    <source>
        <dbReference type="FlyBase" id="FBgn0052174"/>
    </source>
</evidence>
<proteinExistence type="inferred from homology"/>
<organism evidence="3">
    <name type="scientific">Drosophila melanogaster</name>
    <name type="common">Fruit fly</name>
    <dbReference type="NCBI Taxonomy" id="7227"/>
    <lineage>
        <taxon>Eukaryota</taxon>
        <taxon>Metazoa</taxon>
        <taxon>Ecdysozoa</taxon>
        <taxon>Arthropoda</taxon>
        <taxon>Hexapoda</taxon>
        <taxon>Insecta</taxon>
        <taxon>Pterygota</taxon>
        <taxon>Neoptera</taxon>
        <taxon>Endopterygota</taxon>
        <taxon>Diptera</taxon>
        <taxon>Brachycera</taxon>
        <taxon>Muscomorpha</taxon>
        <taxon>Ephydroidea</taxon>
        <taxon>Drosophilidae</taxon>
        <taxon>Drosophila</taxon>
        <taxon>Sophophora</taxon>
    </lineage>
</organism>
<gene>
    <name evidence="4" type="primary">Coq4</name>
    <name evidence="4" type="ORF">CG32174</name>
</gene>
<dbReference type="EC" id="4.1.1.130" evidence="1"/>
<dbReference type="EMBL" id="AE014296">
    <property type="protein sequence ID" value="AAF49345.3"/>
    <property type="molecule type" value="Genomic_DNA"/>
</dbReference>
<dbReference type="EMBL" id="AE014296">
    <property type="protein sequence ID" value="ACL83318.1"/>
    <property type="molecule type" value="Genomic_DNA"/>
</dbReference>
<dbReference type="RefSeq" id="NP_001246815.1">
    <property type="nucleotide sequence ID" value="NM_001259886.1"/>
</dbReference>
<dbReference type="RefSeq" id="NP_648977.3">
    <property type="nucleotide sequence ID" value="NM_140720.5"/>
</dbReference>
<dbReference type="RefSeq" id="NP_730270.1">
    <property type="nucleotide sequence ID" value="NM_168732.3"/>
</dbReference>
<dbReference type="SMR" id="Q9VVG6"/>
<dbReference type="FunCoup" id="Q9VVG6">
    <property type="interactions" value="728"/>
</dbReference>
<dbReference type="STRING" id="7227.FBpp0289097"/>
<dbReference type="PaxDb" id="7227-FBpp0298344"/>
<dbReference type="DNASU" id="261607"/>
<dbReference type="EnsemblMetazoa" id="FBtr0075227">
    <property type="protein sequence ID" value="FBpp0074989"/>
    <property type="gene ID" value="FBgn0052174"/>
</dbReference>
<dbReference type="EnsemblMetazoa" id="FBtr0299819">
    <property type="protein sequence ID" value="FBpp0289097"/>
    <property type="gene ID" value="FBgn0052174"/>
</dbReference>
<dbReference type="EnsemblMetazoa" id="FBtr0307343">
    <property type="protein sequence ID" value="FBpp0298344"/>
    <property type="gene ID" value="FBgn0052174"/>
</dbReference>
<dbReference type="GeneID" id="261607"/>
<dbReference type="KEGG" id="dme:Dmel_CG32174"/>
<dbReference type="UCSC" id="CG32174-RB">
    <property type="organism name" value="d. melanogaster"/>
</dbReference>
<dbReference type="AGR" id="FB:FBgn0052174"/>
<dbReference type="CTD" id="51117"/>
<dbReference type="FlyBase" id="FBgn0052174">
    <property type="gene designation" value="Coq4"/>
</dbReference>
<dbReference type="VEuPathDB" id="VectorBase:FBgn0052174"/>
<dbReference type="eggNOG" id="KOG3244">
    <property type="taxonomic scope" value="Eukaryota"/>
</dbReference>
<dbReference type="GeneTree" id="ENSGT00390000003828"/>
<dbReference type="HOGENOM" id="CLU_061241_1_1_1"/>
<dbReference type="InParanoid" id="Q9VVG6"/>
<dbReference type="OMA" id="YYERHFH"/>
<dbReference type="OrthoDB" id="4249at2759"/>
<dbReference type="PhylomeDB" id="Q9VVG6"/>
<dbReference type="Reactome" id="R-DME-2142789">
    <property type="pathway name" value="Ubiquinol biosynthesis"/>
</dbReference>
<dbReference type="UniPathway" id="UPA00232"/>
<dbReference type="BioGRID-ORCS" id="261607">
    <property type="hits" value="0 hits in 1 CRISPR screen"/>
</dbReference>
<dbReference type="ChiTaRS" id="Coq4">
    <property type="organism name" value="fly"/>
</dbReference>
<dbReference type="GenomeRNAi" id="261607"/>
<dbReference type="PRO" id="PR:Q9VVG6"/>
<dbReference type="Proteomes" id="UP000000803">
    <property type="component" value="Chromosome 3L"/>
</dbReference>
<dbReference type="Bgee" id="FBgn0052174">
    <property type="expression patterns" value="Expressed in seminal fluid secreting gland and 13 other cell types or tissues"/>
</dbReference>
<dbReference type="GO" id="GO:0031314">
    <property type="term" value="C:extrinsic component of mitochondrial inner membrane"/>
    <property type="evidence" value="ECO:0007669"/>
    <property type="project" value="UniProtKB-UniRule"/>
</dbReference>
<dbReference type="GO" id="GO:0005743">
    <property type="term" value="C:mitochondrial inner membrane"/>
    <property type="evidence" value="ECO:0000250"/>
    <property type="project" value="UniProtKB"/>
</dbReference>
<dbReference type="GO" id="GO:0005739">
    <property type="term" value="C:mitochondrion"/>
    <property type="evidence" value="ECO:0000318"/>
    <property type="project" value="GO_Central"/>
</dbReference>
<dbReference type="GO" id="GO:0110142">
    <property type="term" value="C:ubiquinone biosynthesis complex"/>
    <property type="evidence" value="ECO:0000250"/>
    <property type="project" value="FlyBase"/>
</dbReference>
<dbReference type="GO" id="GO:0120539">
    <property type="term" value="F:4-hydroxy-3-methoxy-5-polyprenylbenzoate decarboxylase activity"/>
    <property type="evidence" value="ECO:0000250"/>
    <property type="project" value="FlyBase"/>
</dbReference>
<dbReference type="GO" id="GO:0006744">
    <property type="term" value="P:ubiquinone biosynthetic process"/>
    <property type="evidence" value="ECO:0000250"/>
    <property type="project" value="UniProtKB"/>
</dbReference>
<dbReference type="HAMAP" id="MF_03111">
    <property type="entry name" value="Coq4"/>
    <property type="match status" value="1"/>
</dbReference>
<dbReference type="InterPro" id="IPR007715">
    <property type="entry name" value="Coq4"/>
</dbReference>
<dbReference type="InterPro" id="IPR027540">
    <property type="entry name" value="Coq4_euk"/>
</dbReference>
<dbReference type="PANTHER" id="PTHR12922">
    <property type="entry name" value="UBIQUINONE BIOSYNTHESIS PROTEIN"/>
    <property type="match status" value="1"/>
</dbReference>
<dbReference type="PANTHER" id="PTHR12922:SF7">
    <property type="entry name" value="UBIQUINONE BIOSYNTHESIS PROTEIN COQ4 HOMOLOG, MITOCHONDRIAL"/>
    <property type="match status" value="1"/>
</dbReference>
<dbReference type="Pfam" id="PF05019">
    <property type="entry name" value="Coq4"/>
    <property type="match status" value="1"/>
</dbReference>
<keyword id="KW-0456">Lyase</keyword>
<keyword id="KW-0472">Membrane</keyword>
<keyword id="KW-0479">Metal-binding</keyword>
<keyword id="KW-0496">Mitochondrion</keyword>
<keyword id="KW-0999">Mitochondrion inner membrane</keyword>
<keyword id="KW-1185">Reference proteome</keyword>
<keyword id="KW-0831">Ubiquinone biosynthesis</keyword>
<keyword id="KW-0862">Zinc</keyword>
<sequence length="268" mass="30743">MMQRCLRLQKPLALRRGLRLAQANSQAVATEAPEAEPLDAFERQYLKERIEISPFQRLFLGAGSSIAALLNPRRHDMIACLGETTGEDALWTILDTMQASEEGQRIMADKPRIHTSTIDFKYLETLPPDTFGAAYVKFLKDNQVTPDSRMAVRFLEDPKLAYLMTRYRECHDLIHTVLDMPTNMLGEVAVKWVEALNTGLPMCYGGAVFGAVRLRPKQRRAYLKHYLPWALENGKRTKPLMPVYWEKRWEQNIHELRSELGITVLNKA</sequence>
<protein>
    <recommendedName>
        <fullName evidence="1">Ubiquinone biosynthesis protein COQ4 homolog, mitochondrial</fullName>
    </recommendedName>
    <alternativeName>
        <fullName>4-hydroxy-3-methoxy-5-polyprenylbenzoate decarboxylase</fullName>
        <ecNumber evidence="1">4.1.1.130</ecNumber>
    </alternativeName>
    <alternativeName>
        <fullName evidence="1">Coenzyme Q biosynthesis protein 4 homolog</fullName>
    </alternativeName>
</protein>
<comment type="function">
    <text evidence="1">Lyase that catalyzes the C1-decarboxylation of 4-hydroxy-3-methoxy-5-(all-trans-polyprenyl)benzoic acid into 2-methoxy-6-(all-trans-polyprenyl)phenol during ubiquinone biosynthesis.</text>
</comment>
<comment type="catalytic activity">
    <reaction evidence="1">
        <text>a 4-hydroxy-3-methoxy-5-(all-trans-polyprenyl)benzoate + H(+) = a 2-methoxy-6-(all-trans-polyprenyl)phenol + CO2</text>
        <dbReference type="Rhea" id="RHEA:81179"/>
        <dbReference type="Rhea" id="RHEA-COMP:9551"/>
        <dbReference type="Rhea" id="RHEA-COMP:10931"/>
        <dbReference type="ChEBI" id="CHEBI:15378"/>
        <dbReference type="ChEBI" id="CHEBI:16526"/>
        <dbReference type="ChEBI" id="CHEBI:62731"/>
        <dbReference type="ChEBI" id="CHEBI:84443"/>
        <dbReference type="EC" id="4.1.1.130"/>
    </reaction>
</comment>
<comment type="cofactor">
    <cofactor evidence="1">
        <name>Zn(2+)</name>
        <dbReference type="ChEBI" id="CHEBI:29105"/>
    </cofactor>
</comment>
<comment type="pathway">
    <text evidence="1">Cofactor biosynthesis; ubiquinone biosynthesis.</text>
</comment>
<comment type="subunit">
    <text evidence="1">Component of a multi-subunit COQ enzyme complex.</text>
</comment>
<comment type="subcellular location">
    <subcellularLocation>
        <location evidence="1">Mitochondrion inner membrane</location>
        <topology evidence="1">Peripheral membrane protein</topology>
        <orientation evidence="1">Matrix side</orientation>
    </subcellularLocation>
</comment>
<comment type="miscellaneous">
    <text evidence="1">This protein may be expected to contain an N-terminal transit peptide but none has been predicted.</text>
</comment>
<comment type="similarity">
    <text evidence="1">Belongs to the COQ4 family.</text>
</comment>